<keyword id="KW-0012">Acyltransferase</keyword>
<keyword id="KW-0028">Amino-acid biosynthesis</keyword>
<keyword id="KW-0055">Arginine biosynthesis</keyword>
<keyword id="KW-0068">Autocatalytic cleavage</keyword>
<keyword id="KW-0963">Cytoplasm</keyword>
<keyword id="KW-0511">Multifunctional enzyme</keyword>
<keyword id="KW-1185">Reference proteome</keyword>
<keyword id="KW-0808">Transferase</keyword>
<name>ARGJ_RUEPO</name>
<comment type="function">
    <text evidence="1">Catalyzes two activities which are involved in the cyclic version of arginine biosynthesis: the synthesis of N-acetylglutamate from glutamate and acetyl-CoA as the acetyl donor, and of ornithine by transacetylation between N(2)-acetylornithine and glutamate.</text>
</comment>
<comment type="catalytic activity">
    <reaction evidence="1">
        <text>N(2)-acetyl-L-ornithine + L-glutamate = N-acetyl-L-glutamate + L-ornithine</text>
        <dbReference type="Rhea" id="RHEA:15349"/>
        <dbReference type="ChEBI" id="CHEBI:29985"/>
        <dbReference type="ChEBI" id="CHEBI:44337"/>
        <dbReference type="ChEBI" id="CHEBI:46911"/>
        <dbReference type="ChEBI" id="CHEBI:57805"/>
        <dbReference type="EC" id="2.3.1.35"/>
    </reaction>
</comment>
<comment type="catalytic activity">
    <reaction evidence="1">
        <text>L-glutamate + acetyl-CoA = N-acetyl-L-glutamate + CoA + H(+)</text>
        <dbReference type="Rhea" id="RHEA:24292"/>
        <dbReference type="ChEBI" id="CHEBI:15378"/>
        <dbReference type="ChEBI" id="CHEBI:29985"/>
        <dbReference type="ChEBI" id="CHEBI:44337"/>
        <dbReference type="ChEBI" id="CHEBI:57287"/>
        <dbReference type="ChEBI" id="CHEBI:57288"/>
        <dbReference type="EC" id="2.3.1.1"/>
    </reaction>
</comment>
<comment type="pathway">
    <text evidence="1">Amino-acid biosynthesis; L-arginine biosynthesis; L-ornithine and N-acetyl-L-glutamate from L-glutamate and N(2)-acetyl-L-ornithine (cyclic): step 1/1.</text>
</comment>
<comment type="pathway">
    <text evidence="1">Amino-acid biosynthesis; L-arginine biosynthesis; N(2)-acetyl-L-ornithine from L-glutamate: step 1/4.</text>
</comment>
<comment type="subunit">
    <text evidence="1">Heterotetramer of two alpha and two beta chains.</text>
</comment>
<comment type="subcellular location">
    <subcellularLocation>
        <location evidence="1">Cytoplasm</location>
    </subcellularLocation>
</comment>
<comment type="similarity">
    <text evidence="1">Belongs to the ArgJ family.</text>
</comment>
<proteinExistence type="inferred from homology"/>
<accession>Q5LWL6</accession>
<feature type="chain" id="PRO_0000227258" description="Arginine biosynthesis bifunctional protein ArgJ alpha chain" evidence="1">
    <location>
        <begin position="1"/>
        <end position="198"/>
    </location>
</feature>
<feature type="chain" id="PRO_0000227259" description="Arginine biosynthesis bifunctional protein ArgJ beta chain" evidence="1">
    <location>
        <begin position="199"/>
        <end position="408"/>
    </location>
</feature>
<feature type="active site" description="Nucleophile" evidence="1">
    <location>
        <position position="199"/>
    </location>
</feature>
<feature type="binding site" evidence="1">
    <location>
        <position position="162"/>
    </location>
    <ligand>
        <name>substrate</name>
    </ligand>
</feature>
<feature type="binding site" evidence="1">
    <location>
        <position position="188"/>
    </location>
    <ligand>
        <name>substrate</name>
    </ligand>
</feature>
<feature type="binding site" evidence="1">
    <location>
        <position position="199"/>
    </location>
    <ligand>
        <name>substrate</name>
    </ligand>
</feature>
<feature type="binding site" evidence="1">
    <location>
        <position position="280"/>
    </location>
    <ligand>
        <name>substrate</name>
    </ligand>
</feature>
<feature type="binding site" evidence="1">
    <location>
        <position position="403"/>
    </location>
    <ligand>
        <name>substrate</name>
    </ligand>
</feature>
<feature type="binding site" evidence="1">
    <location>
        <position position="408"/>
    </location>
    <ligand>
        <name>substrate</name>
    </ligand>
</feature>
<feature type="site" description="Involved in the stabilization of negative charge on the oxyanion by the formation of the oxyanion hole" evidence="1">
    <location>
        <position position="125"/>
    </location>
</feature>
<feature type="site" description="Involved in the stabilization of negative charge on the oxyanion by the formation of the oxyanion hole" evidence="1">
    <location>
        <position position="126"/>
    </location>
</feature>
<feature type="site" description="Cleavage; by autolysis" evidence="1">
    <location>
        <begin position="198"/>
        <end position="199"/>
    </location>
</feature>
<gene>
    <name evidence="1" type="primary">argJ</name>
    <name type="ordered locus">SPO0059</name>
</gene>
<evidence type="ECO:0000255" key="1">
    <source>
        <dbReference type="HAMAP-Rule" id="MF_01106"/>
    </source>
</evidence>
<organism>
    <name type="scientific">Ruegeria pomeroyi (strain ATCC 700808 / DSM 15171 / DSS-3)</name>
    <name type="common">Silicibacter pomeroyi</name>
    <dbReference type="NCBI Taxonomy" id="246200"/>
    <lineage>
        <taxon>Bacteria</taxon>
        <taxon>Pseudomonadati</taxon>
        <taxon>Pseudomonadota</taxon>
        <taxon>Alphaproteobacteria</taxon>
        <taxon>Rhodobacterales</taxon>
        <taxon>Roseobacteraceae</taxon>
        <taxon>Ruegeria</taxon>
    </lineage>
</organism>
<sequence length="408" mass="41930">MAKITKVSPLAPAAFPTLPVIDGVRLASIAAGVRYQGRTDVMLAVLDPGTSVAGVFTRSATRSAPVLDCQAKIGGASDGPAAILVNSGNSNAFTGHYGQTSVAEVTQAVADVTGVPVGRVFTSSTGVIGEPMKHERIVAKLGDLNAALSPDALEDAARAIMTTDTFAKGASRTVGIDGKMVKIAGIAKGSGMIAPDMATMLVYIFTDARVEQGALQAMLSAMTDKTFNCITVDSDTSTSDTLLLCATGASGVDAEGNAEFAAALEAVMLDLAQQVVRDGEGATKFVEIRVTGAANDVDAKVHGLAIANSPLVKTAIAGEDPNWGRVVMAIGKSGAAADRDLLSISFGDILVAEKGWVSPNYREEDAAAYMKGQDLVIGVDLGLGAGKSTVWTCDLTHGYIEINADYRS</sequence>
<protein>
    <recommendedName>
        <fullName evidence="1">Arginine biosynthesis bifunctional protein ArgJ</fullName>
    </recommendedName>
    <domain>
        <recommendedName>
            <fullName evidence="1">Glutamate N-acetyltransferase</fullName>
            <ecNumber evidence="1">2.3.1.35</ecNumber>
        </recommendedName>
        <alternativeName>
            <fullName evidence="1">Ornithine acetyltransferase</fullName>
            <shortName evidence="1">OATase</shortName>
        </alternativeName>
        <alternativeName>
            <fullName evidence="1">Ornithine transacetylase</fullName>
        </alternativeName>
    </domain>
    <domain>
        <recommendedName>
            <fullName evidence="1">Amino-acid acetyltransferase</fullName>
            <ecNumber evidence="1">2.3.1.1</ecNumber>
        </recommendedName>
        <alternativeName>
            <fullName evidence="1">N-acetylglutamate synthase</fullName>
            <shortName evidence="1">AGSase</shortName>
        </alternativeName>
    </domain>
    <component>
        <recommendedName>
            <fullName evidence="1">Arginine biosynthesis bifunctional protein ArgJ alpha chain</fullName>
        </recommendedName>
    </component>
    <component>
        <recommendedName>
            <fullName evidence="1">Arginine biosynthesis bifunctional protein ArgJ beta chain</fullName>
        </recommendedName>
    </component>
</protein>
<reference key="1">
    <citation type="journal article" date="2004" name="Nature">
        <title>Genome sequence of Silicibacter pomeroyi reveals adaptations to the marine environment.</title>
        <authorList>
            <person name="Moran M.A."/>
            <person name="Buchan A."/>
            <person name="Gonzalez J.M."/>
            <person name="Heidelberg J.F."/>
            <person name="Whitman W.B."/>
            <person name="Kiene R.P."/>
            <person name="Henriksen J.R."/>
            <person name="King G.M."/>
            <person name="Belas R."/>
            <person name="Fuqua C."/>
            <person name="Brinkac L.M."/>
            <person name="Lewis M."/>
            <person name="Johri S."/>
            <person name="Weaver B."/>
            <person name="Pai G."/>
            <person name="Eisen J.A."/>
            <person name="Rahe E."/>
            <person name="Sheldon W.M."/>
            <person name="Ye W."/>
            <person name="Miller T.R."/>
            <person name="Carlton J."/>
            <person name="Rasko D.A."/>
            <person name="Paulsen I.T."/>
            <person name="Ren Q."/>
            <person name="Daugherty S.C."/>
            <person name="DeBoy R.T."/>
            <person name="Dodson R.J."/>
            <person name="Durkin A.S."/>
            <person name="Madupu R."/>
            <person name="Nelson W.C."/>
            <person name="Sullivan S.A."/>
            <person name="Rosovitz M.J."/>
            <person name="Haft D.H."/>
            <person name="Selengut J."/>
            <person name="Ward N."/>
        </authorList>
    </citation>
    <scope>NUCLEOTIDE SEQUENCE [LARGE SCALE GENOMIC DNA]</scope>
    <source>
        <strain>ATCC 700808 / DSM 15171 / DSS-3</strain>
    </source>
</reference>
<reference key="2">
    <citation type="journal article" date="2014" name="Stand. Genomic Sci.">
        <title>An updated genome annotation for the model marine bacterium Ruegeria pomeroyi DSS-3.</title>
        <authorList>
            <person name="Rivers A.R."/>
            <person name="Smith C.B."/>
            <person name="Moran M.A."/>
        </authorList>
    </citation>
    <scope>GENOME REANNOTATION</scope>
    <source>
        <strain>ATCC 700808 / DSM 15171 / DSS-3</strain>
    </source>
</reference>
<dbReference type="EC" id="2.3.1.35" evidence="1"/>
<dbReference type="EC" id="2.3.1.1" evidence="1"/>
<dbReference type="EMBL" id="CP000031">
    <property type="protein sequence ID" value="AAV93390.1"/>
    <property type="molecule type" value="Genomic_DNA"/>
</dbReference>
<dbReference type="RefSeq" id="WP_011045832.1">
    <property type="nucleotide sequence ID" value="NC_003911.12"/>
</dbReference>
<dbReference type="SMR" id="Q5LWL6"/>
<dbReference type="STRING" id="246200.SPO0059"/>
<dbReference type="MEROPS" id="T05.001"/>
<dbReference type="PaxDb" id="246200-SPO0059"/>
<dbReference type="KEGG" id="sil:SPO0059"/>
<dbReference type="eggNOG" id="COG1364">
    <property type="taxonomic scope" value="Bacteria"/>
</dbReference>
<dbReference type="HOGENOM" id="CLU_027172_1_0_5"/>
<dbReference type="OrthoDB" id="9804242at2"/>
<dbReference type="UniPathway" id="UPA00068">
    <property type="reaction ID" value="UER00106"/>
</dbReference>
<dbReference type="UniPathway" id="UPA00068">
    <property type="reaction ID" value="UER00111"/>
</dbReference>
<dbReference type="Proteomes" id="UP000001023">
    <property type="component" value="Chromosome"/>
</dbReference>
<dbReference type="GO" id="GO:0005737">
    <property type="term" value="C:cytoplasm"/>
    <property type="evidence" value="ECO:0007669"/>
    <property type="project" value="UniProtKB-SubCell"/>
</dbReference>
<dbReference type="GO" id="GO:0004358">
    <property type="term" value="F:glutamate N-acetyltransferase activity"/>
    <property type="evidence" value="ECO:0007669"/>
    <property type="project" value="UniProtKB-UniRule"/>
</dbReference>
<dbReference type="GO" id="GO:0004042">
    <property type="term" value="F:L-glutamate N-acetyltransferase activity"/>
    <property type="evidence" value="ECO:0007669"/>
    <property type="project" value="UniProtKB-UniRule"/>
</dbReference>
<dbReference type="GO" id="GO:0006526">
    <property type="term" value="P:L-arginine biosynthetic process"/>
    <property type="evidence" value="ECO:0007669"/>
    <property type="project" value="UniProtKB-UniRule"/>
</dbReference>
<dbReference type="GO" id="GO:0006592">
    <property type="term" value="P:ornithine biosynthetic process"/>
    <property type="evidence" value="ECO:0007669"/>
    <property type="project" value="TreeGrafter"/>
</dbReference>
<dbReference type="CDD" id="cd02152">
    <property type="entry name" value="OAT"/>
    <property type="match status" value="1"/>
</dbReference>
<dbReference type="FunFam" id="3.10.20.340:FF:000003">
    <property type="entry name" value="Arginine biosynthesis bifunctional protein ArgJ"/>
    <property type="match status" value="1"/>
</dbReference>
<dbReference type="FunFam" id="3.60.70.12:FF:000001">
    <property type="entry name" value="Arginine biosynthesis bifunctional protein ArgJ, chloroplastic"/>
    <property type="match status" value="1"/>
</dbReference>
<dbReference type="Gene3D" id="3.10.20.340">
    <property type="entry name" value="ArgJ beta chain, C-terminal domain"/>
    <property type="match status" value="1"/>
</dbReference>
<dbReference type="Gene3D" id="3.60.70.12">
    <property type="entry name" value="L-amino peptidase D-ALA esterase/amidase"/>
    <property type="match status" value="1"/>
</dbReference>
<dbReference type="HAMAP" id="MF_01106">
    <property type="entry name" value="ArgJ"/>
    <property type="match status" value="1"/>
</dbReference>
<dbReference type="InterPro" id="IPR002813">
    <property type="entry name" value="Arg_biosynth_ArgJ"/>
</dbReference>
<dbReference type="InterPro" id="IPR016117">
    <property type="entry name" value="ArgJ-like_dom_sf"/>
</dbReference>
<dbReference type="InterPro" id="IPR042195">
    <property type="entry name" value="ArgJ_beta_C"/>
</dbReference>
<dbReference type="NCBIfam" id="TIGR00120">
    <property type="entry name" value="ArgJ"/>
    <property type="match status" value="1"/>
</dbReference>
<dbReference type="NCBIfam" id="NF003802">
    <property type="entry name" value="PRK05388.1"/>
    <property type="match status" value="1"/>
</dbReference>
<dbReference type="PANTHER" id="PTHR23100">
    <property type="entry name" value="ARGININE BIOSYNTHESIS BIFUNCTIONAL PROTEIN ARGJ"/>
    <property type="match status" value="1"/>
</dbReference>
<dbReference type="PANTHER" id="PTHR23100:SF0">
    <property type="entry name" value="ARGININE BIOSYNTHESIS BIFUNCTIONAL PROTEIN ARGJ, MITOCHONDRIAL"/>
    <property type="match status" value="1"/>
</dbReference>
<dbReference type="Pfam" id="PF01960">
    <property type="entry name" value="ArgJ"/>
    <property type="match status" value="1"/>
</dbReference>
<dbReference type="SUPFAM" id="SSF56266">
    <property type="entry name" value="DmpA/ArgJ-like"/>
    <property type="match status" value="1"/>
</dbReference>